<protein>
    <recommendedName>
        <fullName evidence="1">Bifunctional protein GlmU</fullName>
    </recommendedName>
    <domain>
        <recommendedName>
            <fullName evidence="1">UDP-N-acetylglucosamine pyrophosphorylase</fullName>
            <ecNumber evidence="1">2.7.7.23</ecNumber>
        </recommendedName>
        <alternativeName>
            <fullName evidence="1">N-acetylglucosamine-1-phosphate uridyltransferase</fullName>
        </alternativeName>
    </domain>
    <domain>
        <recommendedName>
            <fullName evidence="1">Glucosamine-1-phosphate N-acetyltransferase</fullName>
            <ecNumber evidence="1">2.3.1.157</ecNumber>
        </recommendedName>
    </domain>
</protein>
<organism>
    <name type="scientific">Clostridium kluyveri (strain ATCC 8527 / DSM 555 / NBRC 12016 / NCIMB 10680 / K1)</name>
    <dbReference type="NCBI Taxonomy" id="431943"/>
    <lineage>
        <taxon>Bacteria</taxon>
        <taxon>Bacillati</taxon>
        <taxon>Bacillota</taxon>
        <taxon>Clostridia</taxon>
        <taxon>Eubacteriales</taxon>
        <taxon>Clostridiaceae</taxon>
        <taxon>Clostridium</taxon>
    </lineage>
</organism>
<comment type="function">
    <text evidence="1">Catalyzes the last two sequential reactions in the de novo biosynthetic pathway for UDP-N-acetylglucosamine (UDP-GlcNAc). The C-terminal domain catalyzes the transfer of acetyl group from acetyl coenzyme A to glucosamine-1-phosphate (GlcN-1-P) to produce N-acetylglucosamine-1-phosphate (GlcNAc-1-P), which is converted into UDP-GlcNAc by the transfer of uridine 5-monophosphate (from uridine 5-triphosphate), a reaction catalyzed by the N-terminal domain.</text>
</comment>
<comment type="catalytic activity">
    <reaction evidence="1">
        <text>alpha-D-glucosamine 1-phosphate + acetyl-CoA = N-acetyl-alpha-D-glucosamine 1-phosphate + CoA + H(+)</text>
        <dbReference type="Rhea" id="RHEA:13725"/>
        <dbReference type="ChEBI" id="CHEBI:15378"/>
        <dbReference type="ChEBI" id="CHEBI:57287"/>
        <dbReference type="ChEBI" id="CHEBI:57288"/>
        <dbReference type="ChEBI" id="CHEBI:57776"/>
        <dbReference type="ChEBI" id="CHEBI:58516"/>
        <dbReference type="EC" id="2.3.1.157"/>
    </reaction>
</comment>
<comment type="catalytic activity">
    <reaction evidence="1">
        <text>N-acetyl-alpha-D-glucosamine 1-phosphate + UTP + H(+) = UDP-N-acetyl-alpha-D-glucosamine + diphosphate</text>
        <dbReference type="Rhea" id="RHEA:13509"/>
        <dbReference type="ChEBI" id="CHEBI:15378"/>
        <dbReference type="ChEBI" id="CHEBI:33019"/>
        <dbReference type="ChEBI" id="CHEBI:46398"/>
        <dbReference type="ChEBI" id="CHEBI:57705"/>
        <dbReference type="ChEBI" id="CHEBI:57776"/>
        <dbReference type="EC" id="2.7.7.23"/>
    </reaction>
</comment>
<comment type="cofactor">
    <cofactor evidence="1">
        <name>Mg(2+)</name>
        <dbReference type="ChEBI" id="CHEBI:18420"/>
    </cofactor>
    <text evidence="1">Binds 1 Mg(2+) ion per subunit.</text>
</comment>
<comment type="pathway">
    <text evidence="1">Nucleotide-sugar biosynthesis; UDP-N-acetyl-alpha-D-glucosamine biosynthesis; N-acetyl-alpha-D-glucosamine 1-phosphate from alpha-D-glucosamine 6-phosphate (route II): step 2/2.</text>
</comment>
<comment type="pathway">
    <text evidence="1">Nucleotide-sugar biosynthesis; UDP-N-acetyl-alpha-D-glucosamine biosynthesis; UDP-N-acetyl-alpha-D-glucosamine from N-acetyl-alpha-D-glucosamine 1-phosphate: step 1/1.</text>
</comment>
<comment type="pathway">
    <text evidence="1">Bacterial outer membrane biogenesis; LPS lipid A biosynthesis.</text>
</comment>
<comment type="subunit">
    <text evidence="1">Homotrimer.</text>
</comment>
<comment type="subcellular location">
    <subcellularLocation>
        <location evidence="1">Cytoplasm</location>
    </subcellularLocation>
</comment>
<comment type="similarity">
    <text evidence="1">In the N-terminal section; belongs to the N-acetylglucosamine-1-phosphate uridyltransferase family.</text>
</comment>
<comment type="similarity">
    <text evidence="1">In the C-terminal section; belongs to the transferase hexapeptide repeat family.</text>
</comment>
<keyword id="KW-0012">Acyltransferase</keyword>
<keyword id="KW-0133">Cell shape</keyword>
<keyword id="KW-0961">Cell wall biogenesis/degradation</keyword>
<keyword id="KW-0963">Cytoplasm</keyword>
<keyword id="KW-0460">Magnesium</keyword>
<keyword id="KW-0479">Metal-binding</keyword>
<keyword id="KW-0511">Multifunctional enzyme</keyword>
<keyword id="KW-0548">Nucleotidyltransferase</keyword>
<keyword id="KW-0573">Peptidoglycan synthesis</keyword>
<keyword id="KW-1185">Reference proteome</keyword>
<keyword id="KW-0677">Repeat</keyword>
<keyword id="KW-0808">Transferase</keyword>
<evidence type="ECO:0000255" key="1">
    <source>
        <dbReference type="HAMAP-Rule" id="MF_01631"/>
    </source>
</evidence>
<gene>
    <name evidence="1" type="primary">glmU</name>
    <name type="ordered locus">CKL_0146</name>
</gene>
<proteinExistence type="inferred from homology"/>
<reference key="1">
    <citation type="journal article" date="2008" name="Proc. Natl. Acad. Sci. U.S.A.">
        <title>The genome of Clostridium kluyveri, a strict anaerobe with unique metabolic features.</title>
        <authorList>
            <person name="Seedorf H."/>
            <person name="Fricke W.F."/>
            <person name="Veith B."/>
            <person name="Brueggemann H."/>
            <person name="Liesegang H."/>
            <person name="Strittmatter A."/>
            <person name="Miethke M."/>
            <person name="Buckel W."/>
            <person name="Hinderberger J."/>
            <person name="Li F."/>
            <person name="Hagemeier C."/>
            <person name="Thauer R.K."/>
            <person name="Gottschalk G."/>
        </authorList>
    </citation>
    <scope>NUCLEOTIDE SEQUENCE [LARGE SCALE GENOMIC DNA]</scope>
    <source>
        <strain>ATCC 8527 / DSM 555 / NBRC 12016 / NCIMB 10680 / K1</strain>
    </source>
</reference>
<name>GLMU_CLOK5</name>
<dbReference type="EC" id="2.7.7.23" evidence="1"/>
<dbReference type="EC" id="2.3.1.157" evidence="1"/>
<dbReference type="EMBL" id="CP000673">
    <property type="protein sequence ID" value="EDK32216.1"/>
    <property type="molecule type" value="Genomic_DNA"/>
</dbReference>
<dbReference type="RefSeq" id="WP_011988742.1">
    <property type="nucleotide sequence ID" value="NC_009706.1"/>
</dbReference>
<dbReference type="SMR" id="A5N4I5"/>
<dbReference type="STRING" id="431943.CKL_0146"/>
<dbReference type="KEGG" id="ckl:CKL_0146"/>
<dbReference type="eggNOG" id="COG1207">
    <property type="taxonomic scope" value="Bacteria"/>
</dbReference>
<dbReference type="HOGENOM" id="CLU_029499_15_2_9"/>
<dbReference type="UniPathway" id="UPA00113">
    <property type="reaction ID" value="UER00532"/>
</dbReference>
<dbReference type="UniPathway" id="UPA00113">
    <property type="reaction ID" value="UER00533"/>
</dbReference>
<dbReference type="UniPathway" id="UPA00973"/>
<dbReference type="Proteomes" id="UP000002411">
    <property type="component" value="Chromosome"/>
</dbReference>
<dbReference type="GO" id="GO:0005737">
    <property type="term" value="C:cytoplasm"/>
    <property type="evidence" value="ECO:0007669"/>
    <property type="project" value="UniProtKB-SubCell"/>
</dbReference>
<dbReference type="GO" id="GO:0016020">
    <property type="term" value="C:membrane"/>
    <property type="evidence" value="ECO:0007669"/>
    <property type="project" value="GOC"/>
</dbReference>
<dbReference type="GO" id="GO:0019134">
    <property type="term" value="F:glucosamine-1-phosphate N-acetyltransferase activity"/>
    <property type="evidence" value="ECO:0007669"/>
    <property type="project" value="UniProtKB-UniRule"/>
</dbReference>
<dbReference type="GO" id="GO:0000287">
    <property type="term" value="F:magnesium ion binding"/>
    <property type="evidence" value="ECO:0007669"/>
    <property type="project" value="UniProtKB-UniRule"/>
</dbReference>
<dbReference type="GO" id="GO:0003977">
    <property type="term" value="F:UDP-N-acetylglucosamine diphosphorylase activity"/>
    <property type="evidence" value="ECO:0007669"/>
    <property type="project" value="UniProtKB-UniRule"/>
</dbReference>
<dbReference type="GO" id="GO:0000902">
    <property type="term" value="P:cell morphogenesis"/>
    <property type="evidence" value="ECO:0007669"/>
    <property type="project" value="UniProtKB-UniRule"/>
</dbReference>
<dbReference type="GO" id="GO:0071555">
    <property type="term" value="P:cell wall organization"/>
    <property type="evidence" value="ECO:0007669"/>
    <property type="project" value="UniProtKB-KW"/>
</dbReference>
<dbReference type="GO" id="GO:0009245">
    <property type="term" value="P:lipid A biosynthetic process"/>
    <property type="evidence" value="ECO:0007669"/>
    <property type="project" value="UniProtKB-UniRule"/>
</dbReference>
<dbReference type="GO" id="GO:0009252">
    <property type="term" value="P:peptidoglycan biosynthetic process"/>
    <property type="evidence" value="ECO:0007669"/>
    <property type="project" value="UniProtKB-UniRule"/>
</dbReference>
<dbReference type="GO" id="GO:0008360">
    <property type="term" value="P:regulation of cell shape"/>
    <property type="evidence" value="ECO:0007669"/>
    <property type="project" value="UniProtKB-KW"/>
</dbReference>
<dbReference type="GO" id="GO:0006048">
    <property type="term" value="P:UDP-N-acetylglucosamine biosynthetic process"/>
    <property type="evidence" value="ECO:0007669"/>
    <property type="project" value="UniProtKB-UniPathway"/>
</dbReference>
<dbReference type="CDD" id="cd02540">
    <property type="entry name" value="GT2_GlmU_N_bac"/>
    <property type="match status" value="1"/>
</dbReference>
<dbReference type="CDD" id="cd03353">
    <property type="entry name" value="LbH_GlmU_C"/>
    <property type="match status" value="1"/>
</dbReference>
<dbReference type="Gene3D" id="2.160.10.10">
    <property type="entry name" value="Hexapeptide repeat proteins"/>
    <property type="match status" value="1"/>
</dbReference>
<dbReference type="Gene3D" id="3.90.550.10">
    <property type="entry name" value="Spore Coat Polysaccharide Biosynthesis Protein SpsA, Chain A"/>
    <property type="match status" value="1"/>
</dbReference>
<dbReference type="HAMAP" id="MF_01631">
    <property type="entry name" value="GlmU"/>
    <property type="match status" value="1"/>
</dbReference>
<dbReference type="InterPro" id="IPR005882">
    <property type="entry name" value="Bifunctional_GlmU"/>
</dbReference>
<dbReference type="InterPro" id="IPR050065">
    <property type="entry name" value="GlmU-like"/>
</dbReference>
<dbReference type="InterPro" id="IPR038009">
    <property type="entry name" value="GlmU_C_LbH"/>
</dbReference>
<dbReference type="InterPro" id="IPR001451">
    <property type="entry name" value="Hexapep"/>
</dbReference>
<dbReference type="InterPro" id="IPR005835">
    <property type="entry name" value="NTP_transferase_dom"/>
</dbReference>
<dbReference type="InterPro" id="IPR029044">
    <property type="entry name" value="Nucleotide-diphossugar_trans"/>
</dbReference>
<dbReference type="InterPro" id="IPR011004">
    <property type="entry name" value="Trimer_LpxA-like_sf"/>
</dbReference>
<dbReference type="NCBIfam" id="TIGR01173">
    <property type="entry name" value="glmU"/>
    <property type="match status" value="1"/>
</dbReference>
<dbReference type="NCBIfam" id="NF010934">
    <property type="entry name" value="PRK14354.1"/>
    <property type="match status" value="1"/>
</dbReference>
<dbReference type="PANTHER" id="PTHR43584:SF3">
    <property type="entry name" value="BIFUNCTIONAL PROTEIN GLMU"/>
    <property type="match status" value="1"/>
</dbReference>
<dbReference type="PANTHER" id="PTHR43584">
    <property type="entry name" value="NUCLEOTIDYL TRANSFERASE"/>
    <property type="match status" value="1"/>
</dbReference>
<dbReference type="Pfam" id="PF00132">
    <property type="entry name" value="Hexapep"/>
    <property type="match status" value="3"/>
</dbReference>
<dbReference type="Pfam" id="PF00483">
    <property type="entry name" value="NTP_transferase"/>
    <property type="match status" value="1"/>
</dbReference>
<dbReference type="SUPFAM" id="SSF53448">
    <property type="entry name" value="Nucleotide-diphospho-sugar transferases"/>
    <property type="match status" value="1"/>
</dbReference>
<dbReference type="SUPFAM" id="SSF51161">
    <property type="entry name" value="Trimeric LpxA-like enzymes"/>
    <property type="match status" value="1"/>
</dbReference>
<sequence length="456" mass="50227">MYNCAIILAAGEGKRMKSSKPKVLHKICGKEMINVVIDVVKKAQIKDINVVIGKNSEKVKKATEVKNTSYSFQDKQLGTGHAVLCASDFLKNKRGIVAVFTGDSPLIKENTIKNMLDFHEAGGYGATILTSIVQNPFGYGRIIREEDEQVLKIVEHKDCLQEELQVKEINSGMYCFDIESLIESLGKIRNNNAQGEYYLTDVIEILKQEGKKIGALPIPFEETMGVNSRVQLAEAEKIMRNRINKIHMENGVTLIDHNNTYIDLDIQIGKDTIIYPGNVFQGDTVIGENCIFYPNSRIQSSVIKDNVTVENSVVLESTIGENTSVGPFAYIRPETTIGKSVKIGDFVEVKKSTIGDNTKVSHLTYIGDAEVGSKCNFGCGTVVVNYNGKNKNKTLIGNNSFIGCNTNLVSPVKVNDNTYIAAGSTITDEVPEGALAIARARQVNKKSWVYKKGLKK</sequence>
<feature type="chain" id="PRO_1000088127" description="Bifunctional protein GlmU">
    <location>
        <begin position="1"/>
        <end position="456"/>
    </location>
</feature>
<feature type="region of interest" description="Pyrophosphorylase" evidence="1">
    <location>
        <begin position="1"/>
        <end position="229"/>
    </location>
</feature>
<feature type="region of interest" description="Linker" evidence="1">
    <location>
        <begin position="230"/>
        <end position="250"/>
    </location>
</feature>
<feature type="region of interest" description="N-acetyltransferase" evidence="1">
    <location>
        <begin position="251"/>
        <end position="456"/>
    </location>
</feature>
<feature type="active site" description="Proton acceptor" evidence="1">
    <location>
        <position position="362"/>
    </location>
</feature>
<feature type="binding site" evidence="1">
    <location>
        <begin position="8"/>
        <end position="11"/>
    </location>
    <ligand>
        <name>UDP-N-acetyl-alpha-D-glucosamine</name>
        <dbReference type="ChEBI" id="CHEBI:57705"/>
    </ligand>
</feature>
<feature type="binding site" evidence="1">
    <location>
        <position position="22"/>
    </location>
    <ligand>
        <name>UDP-N-acetyl-alpha-D-glucosamine</name>
        <dbReference type="ChEBI" id="CHEBI:57705"/>
    </ligand>
</feature>
<feature type="binding site" evidence="1">
    <location>
        <position position="73"/>
    </location>
    <ligand>
        <name>UDP-N-acetyl-alpha-D-glucosamine</name>
        <dbReference type="ChEBI" id="CHEBI:57705"/>
    </ligand>
</feature>
<feature type="binding site" evidence="1">
    <location>
        <begin position="78"/>
        <end position="79"/>
    </location>
    <ligand>
        <name>UDP-N-acetyl-alpha-D-glucosamine</name>
        <dbReference type="ChEBI" id="CHEBI:57705"/>
    </ligand>
</feature>
<feature type="binding site" evidence="1">
    <location>
        <position position="103"/>
    </location>
    <ligand>
        <name>Mg(2+)</name>
        <dbReference type="ChEBI" id="CHEBI:18420"/>
    </ligand>
</feature>
<feature type="binding site" evidence="1">
    <location>
        <position position="140"/>
    </location>
    <ligand>
        <name>UDP-N-acetyl-alpha-D-glucosamine</name>
        <dbReference type="ChEBI" id="CHEBI:57705"/>
    </ligand>
</feature>
<feature type="binding site" evidence="1">
    <location>
        <position position="155"/>
    </location>
    <ligand>
        <name>UDP-N-acetyl-alpha-D-glucosamine</name>
        <dbReference type="ChEBI" id="CHEBI:57705"/>
    </ligand>
</feature>
<feature type="binding site" evidence="1">
    <location>
        <position position="170"/>
    </location>
    <ligand>
        <name>UDP-N-acetyl-alpha-D-glucosamine</name>
        <dbReference type="ChEBI" id="CHEBI:57705"/>
    </ligand>
</feature>
<feature type="binding site" evidence="1">
    <location>
        <position position="227"/>
    </location>
    <ligand>
        <name>Mg(2+)</name>
        <dbReference type="ChEBI" id="CHEBI:18420"/>
    </ligand>
</feature>
<feature type="binding site" evidence="1">
    <location>
        <position position="227"/>
    </location>
    <ligand>
        <name>UDP-N-acetyl-alpha-D-glucosamine</name>
        <dbReference type="ChEBI" id="CHEBI:57705"/>
    </ligand>
</feature>
<feature type="binding site" evidence="1">
    <location>
        <position position="332"/>
    </location>
    <ligand>
        <name>UDP-N-acetyl-alpha-D-glucosamine</name>
        <dbReference type="ChEBI" id="CHEBI:57705"/>
    </ligand>
</feature>
<feature type="binding site" evidence="1">
    <location>
        <position position="350"/>
    </location>
    <ligand>
        <name>UDP-N-acetyl-alpha-D-glucosamine</name>
        <dbReference type="ChEBI" id="CHEBI:57705"/>
    </ligand>
</feature>
<feature type="binding site" evidence="1">
    <location>
        <position position="365"/>
    </location>
    <ligand>
        <name>UDP-N-acetyl-alpha-D-glucosamine</name>
        <dbReference type="ChEBI" id="CHEBI:57705"/>
    </ligand>
</feature>
<feature type="binding site" evidence="1">
    <location>
        <position position="376"/>
    </location>
    <ligand>
        <name>UDP-N-acetyl-alpha-D-glucosamine</name>
        <dbReference type="ChEBI" id="CHEBI:57705"/>
    </ligand>
</feature>
<feature type="binding site" evidence="1">
    <location>
        <begin position="385"/>
        <end position="386"/>
    </location>
    <ligand>
        <name>acetyl-CoA</name>
        <dbReference type="ChEBI" id="CHEBI:57288"/>
    </ligand>
</feature>
<feature type="binding site" evidence="1">
    <location>
        <position position="422"/>
    </location>
    <ligand>
        <name>acetyl-CoA</name>
        <dbReference type="ChEBI" id="CHEBI:57288"/>
    </ligand>
</feature>
<feature type="binding site" evidence="1">
    <location>
        <position position="439"/>
    </location>
    <ligand>
        <name>acetyl-CoA</name>
        <dbReference type="ChEBI" id="CHEBI:57288"/>
    </ligand>
</feature>
<accession>A5N4I5</accession>